<proteinExistence type="inferred from homology"/>
<reference key="1">
    <citation type="submission" date="2006-08" db="EMBL/GenBank/DDBJ databases">
        <title>Complete sequence of chromosome 1 of Shewanella sp. MR-7.</title>
        <authorList>
            <person name="Copeland A."/>
            <person name="Lucas S."/>
            <person name="Lapidus A."/>
            <person name="Barry K."/>
            <person name="Detter J.C."/>
            <person name="Glavina del Rio T."/>
            <person name="Hammon N."/>
            <person name="Israni S."/>
            <person name="Dalin E."/>
            <person name="Tice H."/>
            <person name="Pitluck S."/>
            <person name="Kiss H."/>
            <person name="Brettin T."/>
            <person name="Bruce D."/>
            <person name="Han C."/>
            <person name="Tapia R."/>
            <person name="Gilna P."/>
            <person name="Schmutz J."/>
            <person name="Larimer F."/>
            <person name="Land M."/>
            <person name="Hauser L."/>
            <person name="Kyrpides N."/>
            <person name="Mikhailova N."/>
            <person name="Nealson K."/>
            <person name="Konstantinidis K."/>
            <person name="Klappenbach J."/>
            <person name="Tiedje J."/>
            <person name="Richardson P."/>
        </authorList>
    </citation>
    <scope>NUCLEOTIDE SEQUENCE [LARGE SCALE GENOMIC DNA]</scope>
    <source>
        <strain>MR-7</strain>
    </source>
</reference>
<evidence type="ECO:0000255" key="1">
    <source>
        <dbReference type="HAMAP-Rule" id="MF_00137"/>
    </source>
</evidence>
<sequence length="367" mass="40827">MSLADSVLAVNNDLPIRTDSPVHSGKVRSVYWLTDADSRRLIQTKGYNVPEDTPLAIMVISDRISAFDCIFHGEGGLKGIPGKGAALNAISNHWFKLFAENGLADSHILDIPHPFVWIVQKARPIKVEAICRQYITGSMWRAYSKGERVFCGITLPEGLEKDQKLPDLLITPSTKGILTGIPGVPAQDDVNISRSDIEANYQAFGFEKVEDIDLYEKLLKDGFKVIAKALADLDQVFVDTKFEFGYVTDKNGNSKLIYMDEVGTPDSSRIWDGAAYRDGKILENSKEGFRQFLLNHFPDPDILLNKDRMPEREALARDNALPLEAMMDVSRTYTGIAEKVTGAAIPLPANPKADIIKILREEYDLIV</sequence>
<accession>Q0HZE8</accession>
<feature type="chain" id="PRO_1000117855" description="Phosphoribosylaminoimidazole-succinocarboxamide synthase">
    <location>
        <begin position="1"/>
        <end position="367"/>
    </location>
</feature>
<keyword id="KW-0067">ATP-binding</keyword>
<keyword id="KW-0436">Ligase</keyword>
<keyword id="KW-0547">Nucleotide-binding</keyword>
<keyword id="KW-0658">Purine biosynthesis</keyword>
<gene>
    <name evidence="1" type="primary">purC</name>
    <name type="ordered locus">Shewmr7_0504</name>
</gene>
<comment type="catalytic activity">
    <reaction evidence="1">
        <text>5-amino-1-(5-phospho-D-ribosyl)imidazole-4-carboxylate + L-aspartate + ATP = (2S)-2-[5-amino-1-(5-phospho-beta-D-ribosyl)imidazole-4-carboxamido]succinate + ADP + phosphate + 2 H(+)</text>
        <dbReference type="Rhea" id="RHEA:22628"/>
        <dbReference type="ChEBI" id="CHEBI:15378"/>
        <dbReference type="ChEBI" id="CHEBI:29991"/>
        <dbReference type="ChEBI" id="CHEBI:30616"/>
        <dbReference type="ChEBI" id="CHEBI:43474"/>
        <dbReference type="ChEBI" id="CHEBI:58443"/>
        <dbReference type="ChEBI" id="CHEBI:77657"/>
        <dbReference type="ChEBI" id="CHEBI:456216"/>
        <dbReference type="EC" id="6.3.2.6"/>
    </reaction>
</comment>
<comment type="pathway">
    <text evidence="1">Purine metabolism; IMP biosynthesis via de novo pathway; 5-amino-1-(5-phospho-D-ribosyl)imidazole-4-carboxamide from 5-amino-1-(5-phospho-D-ribosyl)imidazole-4-carboxylate: step 1/2.</text>
</comment>
<comment type="similarity">
    <text evidence="1">Belongs to the SAICAR synthetase family.</text>
</comment>
<dbReference type="EC" id="6.3.2.6" evidence="1"/>
<dbReference type="EMBL" id="CP000444">
    <property type="protein sequence ID" value="ABI41507.1"/>
    <property type="molecule type" value="Genomic_DNA"/>
</dbReference>
<dbReference type="SMR" id="Q0HZE8"/>
<dbReference type="KEGG" id="shm:Shewmr7_0504"/>
<dbReference type="HOGENOM" id="CLU_064197_0_0_6"/>
<dbReference type="UniPathway" id="UPA00074">
    <property type="reaction ID" value="UER00131"/>
</dbReference>
<dbReference type="GO" id="GO:0005737">
    <property type="term" value="C:cytoplasm"/>
    <property type="evidence" value="ECO:0007669"/>
    <property type="project" value="TreeGrafter"/>
</dbReference>
<dbReference type="GO" id="GO:0005524">
    <property type="term" value="F:ATP binding"/>
    <property type="evidence" value="ECO:0007669"/>
    <property type="project" value="UniProtKB-KW"/>
</dbReference>
<dbReference type="GO" id="GO:0004639">
    <property type="term" value="F:phosphoribosylaminoimidazolesuccinocarboxamide synthase activity"/>
    <property type="evidence" value="ECO:0007669"/>
    <property type="project" value="UniProtKB-UniRule"/>
</dbReference>
<dbReference type="GO" id="GO:0006189">
    <property type="term" value="P:'de novo' IMP biosynthetic process"/>
    <property type="evidence" value="ECO:0007669"/>
    <property type="project" value="UniProtKB-UniRule"/>
</dbReference>
<dbReference type="CDD" id="cd01414">
    <property type="entry name" value="SAICAR_synt_Sc"/>
    <property type="match status" value="1"/>
</dbReference>
<dbReference type="FunFam" id="3.30.200.20:FF:000597">
    <property type="entry name" value="Phosphoribosylaminoimidazole-succinocarboxamide synthase"/>
    <property type="match status" value="1"/>
</dbReference>
<dbReference type="FunFam" id="3.30.470.20:FF:000067">
    <property type="entry name" value="Phosphoribosylaminoimidazole-succinocarboxamide synthase"/>
    <property type="match status" value="1"/>
</dbReference>
<dbReference type="Gene3D" id="3.30.470.20">
    <property type="entry name" value="ATP-grasp fold, B domain"/>
    <property type="match status" value="1"/>
</dbReference>
<dbReference type="Gene3D" id="3.30.200.20">
    <property type="entry name" value="Phosphorylase Kinase, domain 1"/>
    <property type="match status" value="1"/>
</dbReference>
<dbReference type="HAMAP" id="MF_00137">
    <property type="entry name" value="SAICAR_synth"/>
    <property type="match status" value="1"/>
</dbReference>
<dbReference type="InterPro" id="IPR028923">
    <property type="entry name" value="SAICAR_synt/ADE2_N"/>
</dbReference>
<dbReference type="InterPro" id="IPR014106">
    <property type="entry name" value="SAICAR_synthase_Vibrio-typ"/>
</dbReference>
<dbReference type="InterPro" id="IPR018236">
    <property type="entry name" value="SAICAR_synthetase_CS"/>
</dbReference>
<dbReference type="NCBIfam" id="NF010567">
    <property type="entry name" value="PRK13960.1"/>
    <property type="match status" value="1"/>
</dbReference>
<dbReference type="NCBIfam" id="TIGR02735">
    <property type="entry name" value="purC_vibrio"/>
    <property type="match status" value="1"/>
</dbReference>
<dbReference type="PANTHER" id="PTHR43700">
    <property type="entry name" value="PHOSPHORIBOSYLAMINOIMIDAZOLE-SUCCINOCARBOXAMIDE SYNTHASE"/>
    <property type="match status" value="1"/>
</dbReference>
<dbReference type="PANTHER" id="PTHR43700:SF1">
    <property type="entry name" value="PHOSPHORIBOSYLAMINOIMIDAZOLE-SUCCINOCARBOXAMIDE SYNTHASE"/>
    <property type="match status" value="1"/>
</dbReference>
<dbReference type="Pfam" id="PF01259">
    <property type="entry name" value="SAICAR_synt"/>
    <property type="match status" value="1"/>
</dbReference>
<dbReference type="SUPFAM" id="SSF56104">
    <property type="entry name" value="SAICAR synthase-like"/>
    <property type="match status" value="1"/>
</dbReference>
<dbReference type="PROSITE" id="PS01057">
    <property type="entry name" value="SAICAR_SYNTHETASE_1"/>
    <property type="match status" value="1"/>
</dbReference>
<protein>
    <recommendedName>
        <fullName evidence="1">Phosphoribosylaminoimidazole-succinocarboxamide synthase</fullName>
        <ecNumber evidence="1">6.3.2.6</ecNumber>
    </recommendedName>
    <alternativeName>
        <fullName evidence="1">SAICAR synthetase</fullName>
    </alternativeName>
</protein>
<name>PUR7_SHESR</name>
<organism>
    <name type="scientific">Shewanella sp. (strain MR-7)</name>
    <dbReference type="NCBI Taxonomy" id="60481"/>
    <lineage>
        <taxon>Bacteria</taxon>
        <taxon>Pseudomonadati</taxon>
        <taxon>Pseudomonadota</taxon>
        <taxon>Gammaproteobacteria</taxon>
        <taxon>Alteromonadales</taxon>
        <taxon>Shewanellaceae</taxon>
        <taxon>Shewanella</taxon>
    </lineage>
</organism>